<name>KITH_VACCT</name>
<evidence type="ECO:0000250" key="1"/>
<evidence type="ECO:0000250" key="2">
    <source>
        <dbReference type="UniProtKB" id="O57203"/>
    </source>
</evidence>
<evidence type="ECO:0000305" key="3"/>
<accession>Q9JFB7</accession>
<gene>
    <name type="primary">OPG101</name>
    <name type="synonym">TK</name>
    <name type="ORF">TJ2R</name>
</gene>
<organism>
    <name type="scientific">Vaccinia virus (strain Tian Tan)</name>
    <name type="common">VACV</name>
    <dbReference type="NCBI Taxonomy" id="10253"/>
    <lineage>
        <taxon>Viruses</taxon>
        <taxon>Varidnaviria</taxon>
        <taxon>Bamfordvirae</taxon>
        <taxon>Nucleocytoviricota</taxon>
        <taxon>Pokkesviricetes</taxon>
        <taxon>Chitovirales</taxon>
        <taxon>Poxviridae</taxon>
        <taxon>Chordopoxvirinae</taxon>
        <taxon>Orthopoxvirus</taxon>
        <taxon>Vaccinia virus</taxon>
    </lineage>
</organism>
<reference key="1">
    <citation type="submission" date="1998-09" db="EMBL/GenBank/DDBJ databases">
        <title>Complete genomic sequence of vaccinia virus (Tian Tan strain).</title>
        <authorList>
            <person name="Jin Q."/>
            <person name="Hou Y.D."/>
            <person name="Cheng N.H."/>
            <person name="Yao E.M."/>
            <person name="Cheng S.X."/>
            <person name="Yang X.K."/>
            <person name="Jing D.Y."/>
            <person name="Yu W.H."/>
            <person name="Yuan J.S."/>
            <person name="Ma X.J."/>
        </authorList>
    </citation>
    <scope>NUCLEOTIDE SEQUENCE [LARGE SCALE GENOMIC DNA]</scope>
</reference>
<sequence>MNGGHIQLMIGPMFSGKSTELIRRVRRYQIAQYKCVTIKYSNDNRYGTGLWTHDKNNFEALEATKLCDVLESITDFSVIGIDEGQFFPDIVEFCERMANEGKIVIVAALDGTFQRKPFNNILNLIPLSEMVVKLTAVCMKCFKEASFSKRLGEETEIEIIGGNDMYQSVCRKCYIDS</sequence>
<keyword id="KW-0067">ATP-binding</keyword>
<keyword id="KW-1015">Disulfide bond</keyword>
<keyword id="KW-0237">DNA synthesis</keyword>
<keyword id="KW-0418">Kinase</keyword>
<keyword id="KW-0479">Metal-binding</keyword>
<keyword id="KW-0547">Nucleotide-binding</keyword>
<keyword id="KW-0808">Transferase</keyword>
<keyword id="KW-0862">Zinc</keyword>
<dbReference type="EC" id="2.7.1.21"/>
<dbReference type="EMBL" id="AF095689">
    <property type="protein sequence ID" value="AAF33953.1"/>
    <property type="molecule type" value="Genomic_DNA"/>
</dbReference>
<dbReference type="SMR" id="Q9JFB7"/>
<dbReference type="Proteomes" id="UP000163220">
    <property type="component" value="Genome"/>
</dbReference>
<dbReference type="GO" id="GO:0005524">
    <property type="term" value="F:ATP binding"/>
    <property type="evidence" value="ECO:0007669"/>
    <property type="project" value="UniProtKB-KW"/>
</dbReference>
<dbReference type="GO" id="GO:0046872">
    <property type="term" value="F:metal ion binding"/>
    <property type="evidence" value="ECO:0007669"/>
    <property type="project" value="UniProtKB-KW"/>
</dbReference>
<dbReference type="GO" id="GO:0004797">
    <property type="term" value="F:thymidine kinase activity"/>
    <property type="evidence" value="ECO:0007669"/>
    <property type="project" value="UniProtKB-EC"/>
</dbReference>
<dbReference type="GO" id="GO:0071897">
    <property type="term" value="P:DNA biosynthetic process"/>
    <property type="evidence" value="ECO:0007669"/>
    <property type="project" value="UniProtKB-KW"/>
</dbReference>
<dbReference type="GO" id="GO:0046104">
    <property type="term" value="P:thymidine metabolic process"/>
    <property type="evidence" value="ECO:0007669"/>
    <property type="project" value="TreeGrafter"/>
</dbReference>
<dbReference type="FunFam" id="3.30.60.20:FF:000028">
    <property type="entry name" value="Thymidine kinase"/>
    <property type="match status" value="1"/>
</dbReference>
<dbReference type="FunFam" id="3.40.50.300:FF:000761">
    <property type="entry name" value="Thymidine kinase"/>
    <property type="match status" value="1"/>
</dbReference>
<dbReference type="Gene3D" id="3.30.60.20">
    <property type="match status" value="1"/>
</dbReference>
<dbReference type="Gene3D" id="3.40.50.300">
    <property type="entry name" value="P-loop containing nucleotide triphosphate hydrolases"/>
    <property type="match status" value="1"/>
</dbReference>
<dbReference type="InterPro" id="IPR027417">
    <property type="entry name" value="P-loop_NTPase"/>
</dbReference>
<dbReference type="InterPro" id="IPR001267">
    <property type="entry name" value="Thymidine_kinase"/>
</dbReference>
<dbReference type="InterPro" id="IPR020633">
    <property type="entry name" value="Thymidine_kinase_CS"/>
</dbReference>
<dbReference type="PANTHER" id="PTHR11441">
    <property type="entry name" value="THYMIDINE KINASE"/>
    <property type="match status" value="1"/>
</dbReference>
<dbReference type="PANTHER" id="PTHR11441:SF0">
    <property type="entry name" value="THYMIDINE KINASE, CYTOSOLIC"/>
    <property type="match status" value="1"/>
</dbReference>
<dbReference type="Pfam" id="PF00265">
    <property type="entry name" value="TK"/>
    <property type="match status" value="1"/>
</dbReference>
<dbReference type="PIRSF" id="PIRSF035805">
    <property type="entry name" value="TK_cell"/>
    <property type="match status" value="1"/>
</dbReference>
<dbReference type="SUPFAM" id="SSF57716">
    <property type="entry name" value="Glucocorticoid receptor-like (DNA-binding domain)"/>
    <property type="match status" value="1"/>
</dbReference>
<dbReference type="SUPFAM" id="SSF52540">
    <property type="entry name" value="P-loop containing nucleoside triphosphate hydrolases"/>
    <property type="match status" value="1"/>
</dbReference>
<dbReference type="PROSITE" id="PS00603">
    <property type="entry name" value="TK_CELLULAR_TYPE"/>
    <property type="match status" value="1"/>
</dbReference>
<comment type="function">
    <text evidence="2">Phosphorylates thymidine and thymidine analogs, such as azidothymidine (AZT). Part of the salvage pathway for pyrimidine deoxyribonucleotide synthesis.</text>
</comment>
<comment type="catalytic activity">
    <reaction evidence="2">
        <text>thymidine + ATP = dTMP + ADP + H(+)</text>
        <dbReference type="Rhea" id="RHEA:19129"/>
        <dbReference type="ChEBI" id="CHEBI:15378"/>
        <dbReference type="ChEBI" id="CHEBI:17748"/>
        <dbReference type="ChEBI" id="CHEBI:30616"/>
        <dbReference type="ChEBI" id="CHEBI:63528"/>
        <dbReference type="ChEBI" id="CHEBI:456216"/>
        <dbReference type="EC" id="2.7.1.21"/>
    </reaction>
</comment>
<comment type="subunit">
    <text evidence="1">Homotetramer. Two molecules of substrate bind to each enzyme tetramer.</text>
</comment>
<comment type="similarity">
    <text evidence="3">Belongs to the thymidine kinase family.</text>
</comment>
<feature type="chain" id="PRO_0000174939" description="Thymidine kinase">
    <location>
        <begin position="1"/>
        <end position="177"/>
    </location>
</feature>
<feature type="active site" description="Proton acceptor" evidence="2">
    <location>
        <position position="83"/>
    </location>
</feature>
<feature type="binding site" evidence="2">
    <location>
        <begin position="11"/>
        <end position="18"/>
    </location>
    <ligand>
        <name>ATP</name>
        <dbReference type="ChEBI" id="CHEBI:30616"/>
    </ligand>
</feature>
<feature type="binding site" evidence="2">
    <location>
        <position position="113"/>
    </location>
    <ligand>
        <name>substrate</name>
    </ligand>
</feature>
<feature type="binding site" evidence="2">
    <location>
        <position position="138"/>
    </location>
    <ligand>
        <name>Zn(2+)</name>
        <dbReference type="ChEBI" id="CHEBI:29105"/>
    </ligand>
</feature>
<feature type="binding site" evidence="2">
    <location>
        <position position="141"/>
    </location>
    <ligand>
        <name>Zn(2+)</name>
        <dbReference type="ChEBI" id="CHEBI:29105"/>
    </ligand>
</feature>
<feature type="binding site" evidence="2">
    <location>
        <begin position="157"/>
        <end position="161"/>
    </location>
    <ligand>
        <name>substrate</name>
    </ligand>
</feature>
<feature type="binding site" evidence="2">
    <location>
        <position position="170"/>
    </location>
    <ligand>
        <name>Zn(2+)</name>
        <dbReference type="ChEBI" id="CHEBI:29105"/>
    </ligand>
</feature>
<feature type="binding site" evidence="2">
    <location>
        <position position="173"/>
    </location>
    <ligand>
        <name>Zn(2+)</name>
        <dbReference type="ChEBI" id="CHEBI:29105"/>
    </ligand>
</feature>
<feature type="disulfide bond" description="Interchain (with C-173)" evidence="2">
    <location>
        <position position="170"/>
    </location>
</feature>
<feature type="disulfide bond" description="Interchain (with C-170)" evidence="2">
    <location>
        <position position="173"/>
    </location>
</feature>
<protein>
    <recommendedName>
        <fullName>Thymidine kinase</fullName>
        <ecNumber>2.7.1.21</ecNumber>
    </recommendedName>
</protein>
<organismHost>
    <name type="scientific">Homo sapiens</name>
    <name type="common">Human</name>
    <dbReference type="NCBI Taxonomy" id="9606"/>
</organismHost>
<proteinExistence type="inferred from homology"/>